<name>TRP2_ARATH</name>
<proteinExistence type="evidence at protein level"/>
<protein>
    <recommendedName>
        <fullName>Telomere repeat-binding protein 2</fullName>
    </recommendedName>
    <alternativeName>
        <fullName>Protein TRF-LIKE 1</fullName>
    </alternativeName>
</protein>
<dbReference type="EMBL" id="AL133314">
    <property type="protein sequence ID" value="CAB62329.1"/>
    <property type="molecule type" value="Genomic_DNA"/>
</dbReference>
<dbReference type="EMBL" id="CP002686">
    <property type="protein sequence ID" value="AEE78175.1"/>
    <property type="molecule type" value="Genomic_DNA"/>
</dbReference>
<dbReference type="EMBL" id="CP002686">
    <property type="protein sequence ID" value="AEE78176.1"/>
    <property type="molecule type" value="Genomic_DNA"/>
</dbReference>
<dbReference type="EMBL" id="CP002686">
    <property type="protein sequence ID" value="AEE78177.1"/>
    <property type="molecule type" value="Genomic_DNA"/>
</dbReference>
<dbReference type="EMBL" id="AK229705">
    <property type="protein sequence ID" value="BAF01544.1"/>
    <property type="molecule type" value="mRNA"/>
</dbReference>
<dbReference type="EMBL" id="AY062489">
    <property type="protein sequence ID" value="AAL32567.1"/>
    <property type="status" value="ALT_SEQ"/>
    <property type="molecule type" value="mRNA"/>
</dbReference>
<dbReference type="EMBL" id="AY090966">
    <property type="protein sequence ID" value="AAM14002.1"/>
    <property type="molecule type" value="mRNA"/>
</dbReference>
<dbReference type="EMBL" id="AY519541">
    <property type="protein sequence ID" value="AAS10011.1"/>
    <property type="molecule type" value="mRNA"/>
</dbReference>
<dbReference type="EMBL" id="AY568647">
    <property type="protein sequence ID" value="AAS79537.1"/>
    <property type="molecule type" value="mRNA"/>
</dbReference>
<dbReference type="EMBL" id="AJ630475">
    <property type="protein sequence ID" value="CAG25848.1"/>
    <property type="molecule type" value="mRNA"/>
</dbReference>
<dbReference type="EMBL" id="AY395985">
    <property type="protein sequence ID" value="AAR28946.1"/>
    <property type="molecule type" value="mRNA"/>
</dbReference>
<dbReference type="EMBL" id="BT033142">
    <property type="protein sequence ID" value="ACF40322.1"/>
    <property type="molecule type" value="mRNA"/>
</dbReference>
<dbReference type="PIR" id="T45596">
    <property type="entry name" value="T45596"/>
</dbReference>
<dbReference type="RefSeq" id="NP_001030821.1">
    <molecule id="Q9SNB9-1"/>
    <property type="nucleotide sequence ID" value="NM_001035744.2"/>
</dbReference>
<dbReference type="RefSeq" id="NP_001030822.2">
    <molecule id="Q9SNB9-3"/>
    <property type="nucleotide sequence ID" value="NM_001035745.2"/>
</dbReference>
<dbReference type="RefSeq" id="NP_190243.2">
    <molecule id="Q9SNB9-2"/>
    <property type="nucleotide sequence ID" value="NM_114526.3"/>
</dbReference>
<dbReference type="SMR" id="Q9SNB9"/>
<dbReference type="BioGRID" id="9132">
    <property type="interactions" value="3"/>
</dbReference>
<dbReference type="FunCoup" id="Q9SNB9">
    <property type="interactions" value="1"/>
</dbReference>
<dbReference type="IntAct" id="Q9SNB9">
    <property type="interactions" value="2"/>
</dbReference>
<dbReference type="STRING" id="3702.Q9SNB9"/>
<dbReference type="iPTMnet" id="Q9SNB9"/>
<dbReference type="PaxDb" id="3702-AT3G46590.2"/>
<dbReference type="EnsemblPlants" id="AT3G46590.1">
    <molecule id="Q9SNB9-2"/>
    <property type="protein sequence ID" value="AT3G46590.1"/>
    <property type="gene ID" value="AT3G46590"/>
</dbReference>
<dbReference type="EnsemblPlants" id="AT3G46590.2">
    <molecule id="Q9SNB9-1"/>
    <property type="protein sequence ID" value="AT3G46590.2"/>
    <property type="gene ID" value="AT3G46590"/>
</dbReference>
<dbReference type="EnsemblPlants" id="AT3G46590.3">
    <molecule id="Q9SNB9-3"/>
    <property type="protein sequence ID" value="AT3G46590.3"/>
    <property type="gene ID" value="AT3G46590"/>
</dbReference>
<dbReference type="GeneID" id="823812"/>
<dbReference type="Gramene" id="AT3G46590.1">
    <molecule id="Q9SNB9-2"/>
    <property type="protein sequence ID" value="AT3G46590.1"/>
    <property type="gene ID" value="AT3G46590"/>
</dbReference>
<dbReference type="Gramene" id="AT3G46590.2">
    <molecule id="Q9SNB9-1"/>
    <property type="protein sequence ID" value="AT3G46590.2"/>
    <property type="gene ID" value="AT3G46590"/>
</dbReference>
<dbReference type="Gramene" id="AT3G46590.3">
    <molecule id="Q9SNB9-3"/>
    <property type="protein sequence ID" value="AT3G46590.3"/>
    <property type="gene ID" value="AT3G46590"/>
</dbReference>
<dbReference type="KEGG" id="ath:AT3G46590"/>
<dbReference type="Araport" id="AT3G46590"/>
<dbReference type="TAIR" id="AT3G46590">
    <property type="gene designation" value="TRFL1"/>
</dbReference>
<dbReference type="eggNOG" id="ENOG502QPSZ">
    <property type="taxonomic scope" value="Eukaryota"/>
</dbReference>
<dbReference type="InParanoid" id="Q9SNB9"/>
<dbReference type="OMA" id="YIRPRMN"/>
<dbReference type="PhylomeDB" id="Q9SNB9"/>
<dbReference type="PRO" id="PR:Q9SNB9"/>
<dbReference type="Proteomes" id="UP000006548">
    <property type="component" value="Chromosome 3"/>
</dbReference>
<dbReference type="ExpressionAtlas" id="Q9SNB9">
    <property type="expression patterns" value="baseline and differential"/>
</dbReference>
<dbReference type="GO" id="GO:0005634">
    <property type="term" value="C:nucleus"/>
    <property type="evidence" value="ECO:0007669"/>
    <property type="project" value="UniProtKB-SubCell"/>
</dbReference>
<dbReference type="GO" id="GO:0008301">
    <property type="term" value="F:DNA binding, bending"/>
    <property type="evidence" value="ECO:0000314"/>
    <property type="project" value="TAIR"/>
</dbReference>
<dbReference type="GO" id="GO:0042162">
    <property type="term" value="F:telomeric DNA binding"/>
    <property type="evidence" value="ECO:0000314"/>
    <property type="project" value="TAIR"/>
</dbReference>
<dbReference type="CDD" id="cd11660">
    <property type="entry name" value="SANT_TRF"/>
    <property type="match status" value="1"/>
</dbReference>
<dbReference type="CDD" id="cd17039">
    <property type="entry name" value="Ubl_ubiquitin_like"/>
    <property type="match status" value="1"/>
</dbReference>
<dbReference type="Gene3D" id="1.10.246.220">
    <property type="match status" value="1"/>
</dbReference>
<dbReference type="Gene3D" id="3.10.20.90">
    <property type="entry name" value="Phosphatidylinositol 3-kinase Catalytic Subunit, Chain A, domain 1"/>
    <property type="match status" value="1"/>
</dbReference>
<dbReference type="InterPro" id="IPR009057">
    <property type="entry name" value="Homeodomain-like_sf"/>
</dbReference>
<dbReference type="InterPro" id="IPR017930">
    <property type="entry name" value="Myb_dom"/>
</dbReference>
<dbReference type="InterPro" id="IPR001005">
    <property type="entry name" value="SANT/Myb"/>
</dbReference>
<dbReference type="InterPro" id="IPR031105">
    <property type="entry name" value="TRP_plant"/>
</dbReference>
<dbReference type="InterPro" id="IPR000626">
    <property type="entry name" value="Ubiquitin-like_dom"/>
</dbReference>
<dbReference type="InterPro" id="IPR029071">
    <property type="entry name" value="Ubiquitin-like_domsf"/>
</dbReference>
<dbReference type="PANTHER" id="PTHR21717:SF70">
    <property type="entry name" value="TELOMERE REPEAT-BINDING PROTEIN 2-RELATED"/>
    <property type="match status" value="1"/>
</dbReference>
<dbReference type="PANTHER" id="PTHR21717">
    <property type="entry name" value="TELOMERIC REPEAT BINDING PROTEIN"/>
    <property type="match status" value="1"/>
</dbReference>
<dbReference type="Pfam" id="PF23603">
    <property type="entry name" value="Ubiquitin_TPR1"/>
    <property type="match status" value="1"/>
</dbReference>
<dbReference type="SMART" id="SM00717">
    <property type="entry name" value="SANT"/>
    <property type="match status" value="1"/>
</dbReference>
<dbReference type="SUPFAM" id="SSF46689">
    <property type="entry name" value="Homeodomain-like"/>
    <property type="match status" value="1"/>
</dbReference>
<dbReference type="SUPFAM" id="SSF54236">
    <property type="entry name" value="Ubiquitin-like"/>
    <property type="match status" value="1"/>
</dbReference>
<dbReference type="PROSITE" id="PS51294">
    <property type="entry name" value="HTH_MYB"/>
    <property type="match status" value="1"/>
</dbReference>
<dbReference type="PROSITE" id="PS50053">
    <property type="entry name" value="UBIQUITIN_2"/>
    <property type="match status" value="1"/>
</dbReference>
<accession>Q9SNB9</accession>
<accession>Q2V3Q5</accession>
<accession>Q3L8D5</accession>
<accession>Q700E9</accession>
<accession>Q8RX21</accession>
<accession>Q8W4L7</accession>
<keyword id="KW-0025">Alternative splicing</keyword>
<keyword id="KW-0238">DNA-binding</keyword>
<keyword id="KW-0539">Nucleus</keyword>
<keyword id="KW-1185">Reference proteome</keyword>
<keyword id="KW-0804">Transcription</keyword>
<keyword id="KW-0805">Transcription regulation</keyword>
<reference key="1">
    <citation type="journal article" date="2000" name="Nature">
        <title>Sequence and analysis of chromosome 3 of the plant Arabidopsis thaliana.</title>
        <authorList>
            <person name="Salanoubat M."/>
            <person name="Lemcke K."/>
            <person name="Rieger M."/>
            <person name="Ansorge W."/>
            <person name="Unseld M."/>
            <person name="Fartmann B."/>
            <person name="Valle G."/>
            <person name="Bloecker H."/>
            <person name="Perez-Alonso M."/>
            <person name="Obermaier B."/>
            <person name="Delseny M."/>
            <person name="Boutry M."/>
            <person name="Grivell L.A."/>
            <person name="Mache R."/>
            <person name="Puigdomenech P."/>
            <person name="De Simone V."/>
            <person name="Choisne N."/>
            <person name="Artiguenave F."/>
            <person name="Robert C."/>
            <person name="Brottier P."/>
            <person name="Wincker P."/>
            <person name="Cattolico L."/>
            <person name="Weissenbach J."/>
            <person name="Saurin W."/>
            <person name="Quetier F."/>
            <person name="Schaefer M."/>
            <person name="Mueller-Auer S."/>
            <person name="Gabel C."/>
            <person name="Fuchs M."/>
            <person name="Benes V."/>
            <person name="Wurmbach E."/>
            <person name="Drzonek H."/>
            <person name="Erfle H."/>
            <person name="Jordan N."/>
            <person name="Bangert S."/>
            <person name="Wiedelmann R."/>
            <person name="Kranz H."/>
            <person name="Voss H."/>
            <person name="Holland R."/>
            <person name="Brandt P."/>
            <person name="Nyakatura G."/>
            <person name="Vezzi A."/>
            <person name="D'Angelo M."/>
            <person name="Pallavicini A."/>
            <person name="Toppo S."/>
            <person name="Simionati B."/>
            <person name="Conrad A."/>
            <person name="Hornischer K."/>
            <person name="Kauer G."/>
            <person name="Loehnert T.-H."/>
            <person name="Nordsiek G."/>
            <person name="Reichelt J."/>
            <person name="Scharfe M."/>
            <person name="Schoen O."/>
            <person name="Bargues M."/>
            <person name="Terol J."/>
            <person name="Climent J."/>
            <person name="Navarro P."/>
            <person name="Collado C."/>
            <person name="Perez-Perez A."/>
            <person name="Ottenwaelder B."/>
            <person name="Duchemin D."/>
            <person name="Cooke R."/>
            <person name="Laudie M."/>
            <person name="Berger-Llauro C."/>
            <person name="Purnelle B."/>
            <person name="Masuy D."/>
            <person name="de Haan M."/>
            <person name="Maarse A.C."/>
            <person name="Alcaraz J.-P."/>
            <person name="Cottet A."/>
            <person name="Casacuberta E."/>
            <person name="Monfort A."/>
            <person name="Argiriou A."/>
            <person name="Flores M."/>
            <person name="Liguori R."/>
            <person name="Vitale D."/>
            <person name="Mannhaupt G."/>
            <person name="Haase D."/>
            <person name="Schoof H."/>
            <person name="Rudd S."/>
            <person name="Zaccaria P."/>
            <person name="Mewes H.-W."/>
            <person name="Mayer K.F.X."/>
            <person name="Kaul S."/>
            <person name="Town C.D."/>
            <person name="Koo H.L."/>
            <person name="Tallon L.J."/>
            <person name="Jenkins J."/>
            <person name="Rooney T."/>
            <person name="Rizzo M."/>
            <person name="Walts A."/>
            <person name="Utterback T."/>
            <person name="Fujii C.Y."/>
            <person name="Shea T.P."/>
            <person name="Creasy T.H."/>
            <person name="Haas B."/>
            <person name="Maiti R."/>
            <person name="Wu D."/>
            <person name="Peterson J."/>
            <person name="Van Aken S."/>
            <person name="Pai G."/>
            <person name="Militscher J."/>
            <person name="Sellers P."/>
            <person name="Gill J.E."/>
            <person name="Feldblyum T.V."/>
            <person name="Preuss D."/>
            <person name="Lin X."/>
            <person name="Nierman W.C."/>
            <person name="Salzberg S.L."/>
            <person name="White O."/>
            <person name="Venter J.C."/>
            <person name="Fraser C.M."/>
            <person name="Kaneko T."/>
            <person name="Nakamura Y."/>
            <person name="Sato S."/>
            <person name="Kato T."/>
            <person name="Asamizu E."/>
            <person name="Sasamoto S."/>
            <person name="Kimura T."/>
            <person name="Idesawa K."/>
            <person name="Kawashima K."/>
            <person name="Kishida Y."/>
            <person name="Kiyokawa C."/>
            <person name="Kohara M."/>
            <person name="Matsumoto M."/>
            <person name="Matsuno A."/>
            <person name="Muraki A."/>
            <person name="Nakayama S."/>
            <person name="Nakazaki N."/>
            <person name="Shinpo S."/>
            <person name="Takeuchi C."/>
            <person name="Wada T."/>
            <person name="Watanabe A."/>
            <person name="Yamada M."/>
            <person name="Yasuda M."/>
            <person name="Tabata S."/>
        </authorList>
    </citation>
    <scope>NUCLEOTIDE SEQUENCE [LARGE SCALE GENOMIC DNA]</scope>
    <source>
        <strain>cv. Columbia</strain>
    </source>
</reference>
<reference key="2">
    <citation type="journal article" date="2017" name="Plant J.">
        <title>Araport11: a complete reannotation of the Arabidopsis thaliana reference genome.</title>
        <authorList>
            <person name="Cheng C.Y."/>
            <person name="Krishnakumar V."/>
            <person name="Chan A.P."/>
            <person name="Thibaud-Nissen F."/>
            <person name="Schobel S."/>
            <person name="Town C.D."/>
        </authorList>
    </citation>
    <scope>GENOME REANNOTATION</scope>
    <source>
        <strain>cv. Columbia</strain>
    </source>
</reference>
<reference key="3">
    <citation type="journal article" date="2003" name="Science">
        <title>Empirical analysis of transcriptional activity in the Arabidopsis genome.</title>
        <authorList>
            <person name="Yamada K."/>
            <person name="Lim J."/>
            <person name="Dale J.M."/>
            <person name="Chen H."/>
            <person name="Shinn P."/>
            <person name="Palm C.J."/>
            <person name="Southwick A.M."/>
            <person name="Wu H.C."/>
            <person name="Kim C.J."/>
            <person name="Nguyen M."/>
            <person name="Pham P.K."/>
            <person name="Cheuk R.F."/>
            <person name="Karlin-Newmann G."/>
            <person name="Liu S.X."/>
            <person name="Lam B."/>
            <person name="Sakano H."/>
            <person name="Wu T."/>
            <person name="Yu G."/>
            <person name="Miranda M."/>
            <person name="Quach H.L."/>
            <person name="Tripp M."/>
            <person name="Chang C.H."/>
            <person name="Lee J.M."/>
            <person name="Toriumi M.J."/>
            <person name="Chan M.M."/>
            <person name="Tang C.C."/>
            <person name="Onodera C.S."/>
            <person name="Deng J.M."/>
            <person name="Akiyama K."/>
            <person name="Ansari Y."/>
            <person name="Arakawa T."/>
            <person name="Banh J."/>
            <person name="Banno F."/>
            <person name="Bowser L."/>
            <person name="Brooks S.Y."/>
            <person name="Carninci P."/>
            <person name="Chao Q."/>
            <person name="Choy N."/>
            <person name="Enju A."/>
            <person name="Goldsmith A.D."/>
            <person name="Gurjal M."/>
            <person name="Hansen N.F."/>
            <person name="Hayashizaki Y."/>
            <person name="Johnson-Hopson C."/>
            <person name="Hsuan V.W."/>
            <person name="Iida K."/>
            <person name="Karnes M."/>
            <person name="Khan S."/>
            <person name="Koesema E."/>
            <person name="Ishida J."/>
            <person name="Jiang P.X."/>
            <person name="Jones T."/>
            <person name="Kawai J."/>
            <person name="Kamiya A."/>
            <person name="Meyers C."/>
            <person name="Nakajima M."/>
            <person name="Narusaka M."/>
            <person name="Seki M."/>
            <person name="Sakurai T."/>
            <person name="Satou M."/>
            <person name="Tamse R."/>
            <person name="Vaysberg M."/>
            <person name="Wallender E.K."/>
            <person name="Wong C."/>
            <person name="Yamamura Y."/>
            <person name="Yuan S."/>
            <person name="Shinozaki K."/>
            <person name="Davis R.W."/>
            <person name="Theologis A."/>
            <person name="Ecker J.R."/>
        </authorList>
    </citation>
    <scope>NUCLEOTIDE SEQUENCE [LARGE SCALE MRNA] (ISOFORM 1)</scope>
    <source>
        <strain>cv. Columbia</strain>
    </source>
</reference>
<reference key="4">
    <citation type="journal article" date="2004" name="Plant Physiol.">
        <title>Genome-wide ORFeome cloning and analysis of Arabidopsis transcription factor genes.</title>
        <authorList>
            <person name="Gong W."/>
            <person name="Shen Y.-P."/>
            <person name="Ma L.-G."/>
            <person name="Pan Y."/>
            <person name="Du Y.-L."/>
            <person name="Wang D.-H."/>
            <person name="Yang J.-Y."/>
            <person name="Hu L.-D."/>
            <person name="Liu X.-F."/>
            <person name="Dong C.-X."/>
            <person name="Ma L."/>
            <person name="Chen Y.-H."/>
            <person name="Yang X.-Y."/>
            <person name="Gao Y."/>
            <person name="Zhu D."/>
            <person name="Tan X."/>
            <person name="Mu J.-Y."/>
            <person name="Zhang D.-B."/>
            <person name="Liu Y.-L."/>
            <person name="Dinesh-Kumar S.P."/>
            <person name="Li Y."/>
            <person name="Wang X.-P."/>
            <person name="Gu H.-Y."/>
            <person name="Qu L.-J."/>
            <person name="Bai S.-N."/>
            <person name="Lu Y.-T."/>
            <person name="Li J.-Y."/>
            <person name="Zhao J.-D."/>
            <person name="Zuo J."/>
            <person name="Huang H."/>
            <person name="Deng X.-W."/>
            <person name="Zhu Y.-X."/>
        </authorList>
    </citation>
    <scope>NUCLEOTIDE SEQUENCE [LARGE SCALE MRNA] (ISOFORM 2)</scope>
</reference>
<reference key="5">
    <citation type="journal article" date="2005" name="Bot. Bull. Acad. Sin.">
        <title>Functional redundancy of the duplex telomeric DNA-binding proteins in Arabidopsis.</title>
        <authorList>
            <person name="Chen C.M."/>
            <person name="Wang C.T."/>
            <person name="Kao Y.-H."/>
            <person name="Chang G.-D."/>
            <person name="Ho C.-H."/>
            <person name="Lee F.-M."/>
            <person name="Hseu M.-J."/>
        </authorList>
    </citation>
    <scope>NUCLEOTIDE SEQUENCE [MRNA] (ISOFORM 3)</scope>
</reference>
<reference key="6">
    <citation type="submission" date="2008-07" db="EMBL/GenBank/DDBJ databases">
        <title>Arabidopsis ORF clones.</title>
        <authorList>
            <person name="de los Reyes C."/>
            <person name="Quan R."/>
            <person name="Chen H."/>
            <person name="Bautista V."/>
            <person name="Kim C.J."/>
            <person name="Ecker J.R."/>
        </authorList>
    </citation>
    <scope>NUCLEOTIDE SEQUENCE [LARGE SCALE MRNA] (ISOFORM 1)</scope>
</reference>
<reference key="7">
    <citation type="journal article" date="2004" name="J. Biol. Chem.">
        <title>A C-terminal Myb extension domain defines a novel family of double-strand telomeric DNA-binding proteins in Arabidopsis.</title>
        <authorList>
            <person name="Karamysheva Z.N."/>
            <person name="Surovtseva Y.V."/>
            <person name="Vespa L."/>
            <person name="Shakirov E.V."/>
            <person name="Shippen D.E."/>
        </authorList>
    </citation>
    <scope>GENE FAMILY</scope>
    <scope>DNA-BINDING</scope>
    <scope>TISSUE SPECIFICITY</scope>
    <scope>SUBUNIT</scope>
    <scope>DISRUPTION PHENOTYPE</scope>
</reference>
<reference key="8">
    <citation type="journal article" date="2005" name="Mol. Genet. Genomics">
        <title>AtTBP2 and AtTRP2 in Arabidopsis encode proteins that bind plant telomeric DNA and induce DNA bending in vitro.</title>
        <authorList>
            <person name="Hwang M.G."/>
            <person name="Kim K."/>
            <person name="Lee W.K."/>
            <person name="Cho M.H."/>
        </authorList>
    </citation>
    <scope>FUNCTION</scope>
    <scope>DNA-BINDING</scope>
    <scope>TISSUE SPECIFICITY</scope>
</reference>
<reference key="9">
    <citation type="journal article" date="2006" name="Plant Mol. Biol.">
        <title>The MYB transcription factor superfamily of Arabidopsis: expression analysis and phylogenetic comparison with the rice MYB family.</title>
        <authorList>
            <person name="Chen Y."/>
            <person name="Yang X."/>
            <person name="He K."/>
            <person name="Liu M."/>
            <person name="Li J."/>
            <person name="Gao Z."/>
            <person name="Lin Z."/>
            <person name="Zhang Y."/>
            <person name="Wang X."/>
            <person name="Qiu X."/>
            <person name="Shen Y."/>
            <person name="Zhang L."/>
            <person name="Deng X."/>
            <person name="Luo J."/>
            <person name="Deng X.-W."/>
            <person name="Chen Z."/>
            <person name="Gu H."/>
            <person name="Qu L.-J."/>
        </authorList>
    </citation>
    <scope>GENE FAMILY</scope>
</reference>
<reference key="10">
    <citation type="journal article" date="2010" name="J. Mol. Biol.">
        <title>PAH-domain-specific interactions of the Arabidopsis transcription coregulator SIN3-LIKE1 (SNL1) with telomere-binding protein 1 and ALWAYS EARLY2 Myb-DNA binding factors.</title>
        <authorList>
            <person name="Bowen A.J."/>
            <person name="Gonzalez D."/>
            <person name="Mullins J.G."/>
            <person name="Bhatt A.M."/>
            <person name="Martinez A."/>
            <person name="Conlan R.S."/>
        </authorList>
    </citation>
    <scope>INTERACTION WITH SNL1</scope>
</reference>
<organism>
    <name type="scientific">Arabidopsis thaliana</name>
    <name type="common">Mouse-ear cress</name>
    <dbReference type="NCBI Taxonomy" id="3702"/>
    <lineage>
        <taxon>Eukaryota</taxon>
        <taxon>Viridiplantae</taxon>
        <taxon>Streptophyta</taxon>
        <taxon>Embryophyta</taxon>
        <taxon>Tracheophyta</taxon>
        <taxon>Spermatophyta</taxon>
        <taxon>Magnoliopsida</taxon>
        <taxon>eudicotyledons</taxon>
        <taxon>Gunneridae</taxon>
        <taxon>Pentapetalae</taxon>
        <taxon>rosids</taxon>
        <taxon>malvids</taxon>
        <taxon>Brassicales</taxon>
        <taxon>Brassicaceae</taxon>
        <taxon>Camelineae</taxon>
        <taxon>Arabidopsis</taxon>
    </lineage>
</organism>
<comment type="function">
    <text evidence="5">Binds specifically to the plant telomeric double-stranded DNA sequences. At least 2 repeats of telomeric sequences are required for binding. Induces DNA bending.</text>
</comment>
<comment type="subunit">
    <text evidence="4 6">Homodimer and heterodimer with TRP1. Interacts with SNL1.</text>
</comment>
<comment type="subcellular location">
    <subcellularLocation>
        <location evidence="2">Nucleus</location>
    </subcellularLocation>
</comment>
<comment type="alternative products">
    <event type="alternative splicing"/>
    <isoform>
        <id>Q9SNB9-1</id>
        <name>1</name>
        <sequence type="displayed"/>
    </isoform>
    <isoform>
        <id>Q9SNB9-2</id>
        <name>2</name>
        <sequence type="described" ref="VSP_039136"/>
    </isoform>
    <isoform>
        <id>Q9SNB9-3</id>
        <name>3</name>
        <sequence type="described" ref="VSP_039137"/>
    </isoform>
</comment>
<comment type="tissue specificity">
    <text evidence="4 5">Expressed ubiquitously. Highest expression in flowers and leaves.</text>
</comment>
<comment type="domain">
    <text>The Myb-extension domain (509-540) is necessary and sufficient for telomere binding.</text>
</comment>
<comment type="disruption phenotype">
    <text evidence="4">No visible phenotype, probably due to redundancy.</text>
</comment>
<comment type="sequence caution" evidence="9">
    <conflict type="miscellaneous discrepancy">
        <sequence resource="EMBL-CDS" id="AAL32567"/>
    </conflict>
    <text>Chimera. Chimera of genomic DNA and cDNA.</text>
</comment>
<sequence length="553" mass="61775">MVSHKVLEFGDDGYKLPAQARAPRSLRKKRIYEKKIPGDDKMCAIDLLATVAGSLLLESKSPVNACLVVQNTVKNEYPADENPVKAVPYSESPSLFDNGKCGFSSVITNPNHLLVGDKVGKEVEGFSSLGVSGDVKPDVVASIGSNSSTEVGACGNGSPNESRDDVNLFSRNDDDENFSGYIRTRMTRPVPRIGDRRIRKILASRHWKGGSKNNTDAKPWYCSKRSYYLHHHQRSYPIKKRKYFDSVYDSNSDDYRLQGKTHKGSRTISSMKSRNASFVSRDHHVKLRIKSFRVPELFVEIPETATVGSLKRMVMEAVTTILGDGLRVGLMVQGKKVRDDGKTLLQTGISEENNHLDSLGFSLEPSLETTPQPLLSSYLSDHACDDVTLCHDNALDSSHEPEPSPADSFGKLGTSDHSRALIPVASAAMLAPRPPNRKFKRTEQQLAAQRRIRRPFSVTEVEALVQAVEKLGTGRWRDVKVRAFEDADHRTYVDLKDKWKTLVHTARISPQQRRGEPVPQELLDRVLKAHAYWSQHLMHQLQTEPPSTQVEAL</sequence>
<evidence type="ECO:0000255" key="1">
    <source>
        <dbReference type="PROSITE-ProRule" id="PRU00214"/>
    </source>
</evidence>
<evidence type="ECO:0000255" key="2">
    <source>
        <dbReference type="PROSITE-ProRule" id="PRU00625"/>
    </source>
</evidence>
<evidence type="ECO:0000256" key="3">
    <source>
        <dbReference type="SAM" id="MobiDB-lite"/>
    </source>
</evidence>
<evidence type="ECO:0000269" key="4">
    <source>
    </source>
</evidence>
<evidence type="ECO:0000269" key="5">
    <source>
    </source>
</evidence>
<evidence type="ECO:0000269" key="6">
    <source>
    </source>
</evidence>
<evidence type="ECO:0000303" key="7">
    <source>
    </source>
</evidence>
<evidence type="ECO:0000303" key="8">
    <source ref="5"/>
</evidence>
<evidence type="ECO:0000305" key="9"/>
<gene>
    <name type="primary">TRP2</name>
    <name type="synonym">TRFL1</name>
    <name type="synonym">TRP4</name>
    <name type="ordered locus">At3g46590</name>
    <name type="ORF">F12A12.110</name>
</gene>
<feature type="chain" id="PRO_0000394125" description="Telomere repeat-binding protein 2">
    <location>
        <begin position="1"/>
        <end position="553"/>
    </location>
</feature>
<feature type="domain" description="Ubiquitin-like" evidence="1">
    <location>
        <begin position="285"/>
        <end position="364"/>
    </location>
</feature>
<feature type="domain" description="HTH myb-type" evidence="2">
    <location>
        <begin position="448"/>
        <end position="507"/>
    </location>
</feature>
<feature type="DNA-binding region" description="H-T-H motif" evidence="2">
    <location>
        <begin position="476"/>
        <end position="503"/>
    </location>
</feature>
<feature type="region of interest" description="Disordered" evidence="3">
    <location>
        <begin position="147"/>
        <end position="170"/>
    </location>
</feature>
<feature type="region of interest" description="Disordered" evidence="3">
    <location>
        <begin position="394"/>
        <end position="413"/>
    </location>
</feature>
<feature type="splice variant" id="VSP_039136" description="In isoform 2." evidence="7">
    <location>
        <position position="28"/>
    </location>
</feature>
<feature type="splice variant" id="VSP_039137" description="In isoform 3." evidence="8">
    <location>
        <begin position="210"/>
        <end position="215"/>
    </location>
</feature>